<keyword id="KW-0539">Nucleus</keyword>
<keyword id="KW-1185">Reference proteome</keyword>
<keyword id="KW-0804">Transcription</keyword>
<keyword id="KW-0805">Transcription regulation</keyword>
<accession>G7JMM0</accession>
<dbReference type="EMBL" id="CM001220">
    <property type="protein sequence ID" value="AES91080.1"/>
    <property type="molecule type" value="Genomic_DNA"/>
</dbReference>
<dbReference type="EMBL" id="PSQE01000004">
    <property type="protein sequence ID" value="RHN63401.1"/>
    <property type="molecule type" value="Genomic_DNA"/>
</dbReference>
<dbReference type="RefSeq" id="XP_003608883.1">
    <property type="nucleotide sequence ID" value="XM_003608835.1"/>
</dbReference>
<dbReference type="SMR" id="G7JMM0"/>
<dbReference type="STRING" id="3880.G7JMM0"/>
<dbReference type="PaxDb" id="3880-AES91080"/>
<dbReference type="EnsemblPlants" id="rna26098">
    <property type="protein sequence ID" value="RHN63401.1"/>
    <property type="gene ID" value="gene26098"/>
</dbReference>
<dbReference type="GeneID" id="11413579"/>
<dbReference type="Gramene" id="rna26098">
    <property type="protein sequence ID" value="RHN63401.1"/>
    <property type="gene ID" value="gene26098"/>
</dbReference>
<dbReference type="KEGG" id="mtr:11413579"/>
<dbReference type="eggNOG" id="ENOG502QRCE">
    <property type="taxonomic scope" value="Eukaryota"/>
</dbReference>
<dbReference type="HOGENOM" id="CLU_011924_0_6_1"/>
<dbReference type="OMA" id="ACEGYTI"/>
<dbReference type="OrthoDB" id="1861598at2759"/>
<dbReference type="Proteomes" id="UP000002051">
    <property type="component" value="Chromosome 4"/>
</dbReference>
<dbReference type="Proteomes" id="UP000265566">
    <property type="component" value="Chromosome 4"/>
</dbReference>
<dbReference type="GO" id="GO:0005634">
    <property type="term" value="C:nucleus"/>
    <property type="evidence" value="ECO:0000318"/>
    <property type="project" value="GO_Central"/>
</dbReference>
<dbReference type="GO" id="GO:0003700">
    <property type="term" value="F:DNA-binding transcription factor activity"/>
    <property type="evidence" value="ECO:0000318"/>
    <property type="project" value="GO_Central"/>
</dbReference>
<dbReference type="GO" id="GO:0043565">
    <property type="term" value="F:sequence-specific DNA binding"/>
    <property type="evidence" value="ECO:0000318"/>
    <property type="project" value="GO_Central"/>
</dbReference>
<dbReference type="GO" id="GO:0006355">
    <property type="term" value="P:regulation of DNA-templated transcription"/>
    <property type="evidence" value="ECO:0000318"/>
    <property type="project" value="GO_Central"/>
</dbReference>
<dbReference type="GO" id="GO:0009610">
    <property type="term" value="P:response to symbiotic fungus"/>
    <property type="evidence" value="ECO:0000270"/>
    <property type="project" value="UniProtKB"/>
</dbReference>
<dbReference type="InterPro" id="IPR005202">
    <property type="entry name" value="TF_GRAS"/>
</dbReference>
<dbReference type="PANTHER" id="PTHR31636">
    <property type="entry name" value="OSJNBA0084A10.13 PROTEIN-RELATED"/>
    <property type="match status" value="1"/>
</dbReference>
<dbReference type="Pfam" id="PF03514">
    <property type="entry name" value="GRAS"/>
    <property type="match status" value="1"/>
</dbReference>
<dbReference type="PROSITE" id="PS50985">
    <property type="entry name" value="GRAS"/>
    <property type="match status" value="1"/>
</dbReference>
<proteinExistence type="evidence at protein level"/>
<name>RAD1_MEDTR</name>
<sequence>MSPALYASTFKCEVDENPSLMGSYYASLYPNLPILENSATSTWILNPFSDHETETIRDHKKLKRSTVTIPIWFANFSSHSNSFFNNINSNNNSVNSIPRLHFRDHIRTYKQRYFASEAVEEAAEDNFNYNNCEAEEDGSCADGMRLVQLLIACAEAVACRDKSHASVLLSELKSNALVFGSSFQRVASCFVQGLTERLTLIQPIGNNSAGSDTKSMMNIMDAASEEMEEAFKLVYENCPHIQFGHFVANSIILEAFEGESFLHVVDLGMSLGLPHGHQWRGLIQSLADRSSHRVRRLRITAIGLCIARIQVIGEELSIYAKNLGIHLEFSIVEKNLENLKPKDIKVNEKEVLVVNSILQLHCVVKESRGALNAVLQMIHGLSPKVLVMAEQDSGHNGPFFLGRFMESLHYYSAIFDSLDAMLPKYDTKRAKMEQFYFAEEIKNIVSCEGPLRMERHEKVDQWRRRMSRAGFQGSPIKMVVQAKQWLVKNNVCDGYTVVEEKGCLVLGWKSKPIVAVSCWKC</sequence>
<organism>
    <name type="scientific">Medicago truncatula</name>
    <name type="common">Barrel medic</name>
    <name type="synonym">Medicago tribuloides</name>
    <dbReference type="NCBI Taxonomy" id="3880"/>
    <lineage>
        <taxon>Eukaryota</taxon>
        <taxon>Viridiplantae</taxon>
        <taxon>Streptophyta</taxon>
        <taxon>Embryophyta</taxon>
        <taxon>Tracheophyta</taxon>
        <taxon>Spermatophyta</taxon>
        <taxon>Magnoliopsida</taxon>
        <taxon>eudicotyledons</taxon>
        <taxon>Gunneridae</taxon>
        <taxon>Pentapetalae</taxon>
        <taxon>rosids</taxon>
        <taxon>fabids</taxon>
        <taxon>Fabales</taxon>
        <taxon>Fabaceae</taxon>
        <taxon>Papilionoideae</taxon>
        <taxon>50 kb inversion clade</taxon>
        <taxon>NPAAA clade</taxon>
        <taxon>Hologalegina</taxon>
        <taxon>IRL clade</taxon>
        <taxon>Trifolieae</taxon>
        <taxon>Medicago</taxon>
    </lineage>
</organism>
<comment type="function">
    <text evidence="1 4">Transcription factor acting as a regulator of arbuscular mycorrhiza (AM)-related genes (e.g. STR) (PubMed:26511916). Required for the morphogenesis of arbuscules upon symbiosis with AM fungi (e.g. Glomus versiforme) (PubMed:26511916). Also involved in restricting mycorrhizal colonization of the root meristem (By similarity).</text>
</comment>
<comment type="subunit">
    <text evidence="1 4">Interacts with RAM1 (PubMed:26511916). Interacts with NSP2 (By similarity).</text>
</comment>
<comment type="subcellular location">
    <subcellularLocation>
        <location evidence="2">Nucleus</location>
    </subcellularLocation>
</comment>
<comment type="induction">
    <text evidence="4">Accumulates in roots, in a RAM1-dependent manner, during colonization by arbuscular mycorrhizal fungi (e.g. Glomus versiforme) (PubMed:26511916). Triggered by RAM1 (PubMed:26511916).</text>
</comment>
<comment type="disruption phenotype">
    <text evidence="4">Reduced intraradical colonization by arbuscular mycorrhiza (AM)-fungi (e.g. Glomus versiforme) upon symbiosis in roots.</text>
</comment>
<comment type="similarity">
    <text evidence="3">Belongs to the GRAS family.</text>
</comment>
<gene>
    <name evidence="5" type="primary">RAD1</name>
    <name evidence="7" type="ordered locus">MTR_4g104020</name>
    <name evidence="8" type="ORF">MtrunA17_Chr4g0057891</name>
</gene>
<feature type="chain" id="PRO_0000450024" description="GRAS family protein RAD1">
    <location>
        <begin position="1"/>
        <end position="521"/>
    </location>
</feature>
<feature type="domain" description="GRAS" evidence="3">
    <location>
        <begin position="137"/>
        <end position="520"/>
    </location>
</feature>
<feature type="region of interest" description="Leucine repeat I (LRI)" evidence="3">
    <location>
        <begin position="144"/>
        <end position="212"/>
    </location>
</feature>
<feature type="region of interest" description="VHIID" evidence="3">
    <location>
        <begin position="231"/>
        <end position="301"/>
    </location>
</feature>
<feature type="region of interest" description="Leucine repeat II (LRII)" evidence="3">
    <location>
        <begin position="311"/>
        <end position="343"/>
    </location>
</feature>
<feature type="region of interest" description="PFYRE" evidence="3">
    <location>
        <begin position="352"/>
        <end position="443"/>
    </location>
</feature>
<feature type="region of interest" description="SAW" evidence="3">
    <location>
        <begin position="446"/>
        <end position="520"/>
    </location>
</feature>
<feature type="short sequence motif" description="VHIID" evidence="3">
    <location>
        <begin position="262"/>
        <end position="266"/>
    </location>
</feature>
<evidence type="ECO:0000250" key="1">
    <source>
        <dbReference type="UniProtKB" id="A0A1B1WAJ0"/>
    </source>
</evidence>
<evidence type="ECO:0000250" key="2">
    <source>
        <dbReference type="UniProtKB" id="G7L166"/>
    </source>
</evidence>
<evidence type="ECO:0000255" key="3">
    <source>
        <dbReference type="PROSITE-ProRule" id="PRU01191"/>
    </source>
</evidence>
<evidence type="ECO:0000269" key="4">
    <source>
    </source>
</evidence>
<evidence type="ECO:0000303" key="5">
    <source>
    </source>
</evidence>
<evidence type="ECO:0000305" key="6"/>
<evidence type="ECO:0000312" key="7">
    <source>
        <dbReference type="EMBL" id="AES91080.1"/>
    </source>
</evidence>
<evidence type="ECO:0000312" key="8">
    <source>
        <dbReference type="EMBL" id="RHN63401.1"/>
    </source>
</evidence>
<reference key="1">
    <citation type="journal article" date="2011" name="Nature">
        <title>The Medicago genome provides insight into the evolution of rhizobial symbioses.</title>
        <authorList>
            <person name="Young N.D."/>
            <person name="Debelle F."/>
            <person name="Oldroyd G.E.D."/>
            <person name="Geurts R."/>
            <person name="Cannon S.B."/>
            <person name="Udvardi M.K."/>
            <person name="Benedito V.A."/>
            <person name="Mayer K.F.X."/>
            <person name="Gouzy J."/>
            <person name="Schoof H."/>
            <person name="Van de Peer Y."/>
            <person name="Proost S."/>
            <person name="Cook D.R."/>
            <person name="Meyers B.C."/>
            <person name="Spannagl M."/>
            <person name="Cheung F."/>
            <person name="De Mita S."/>
            <person name="Krishnakumar V."/>
            <person name="Gundlach H."/>
            <person name="Zhou S."/>
            <person name="Mudge J."/>
            <person name="Bharti A.K."/>
            <person name="Murray J.D."/>
            <person name="Naoumkina M.A."/>
            <person name="Rosen B."/>
            <person name="Silverstein K.A.T."/>
            <person name="Tang H."/>
            <person name="Rombauts S."/>
            <person name="Zhao P.X."/>
            <person name="Zhou P."/>
            <person name="Barbe V."/>
            <person name="Bardou P."/>
            <person name="Bechner M."/>
            <person name="Bellec A."/>
            <person name="Berger A."/>
            <person name="Berges H."/>
            <person name="Bidwell S."/>
            <person name="Bisseling T."/>
            <person name="Choisne N."/>
            <person name="Couloux A."/>
            <person name="Denny R."/>
            <person name="Deshpande S."/>
            <person name="Dai X."/>
            <person name="Doyle J.J."/>
            <person name="Dudez A.-M."/>
            <person name="Farmer A.D."/>
            <person name="Fouteau S."/>
            <person name="Franken C."/>
            <person name="Gibelin C."/>
            <person name="Gish J."/>
            <person name="Goldstein S."/>
            <person name="Gonzalez A.J."/>
            <person name="Green P.J."/>
            <person name="Hallab A."/>
            <person name="Hartog M."/>
            <person name="Hua A."/>
            <person name="Humphray S.J."/>
            <person name="Jeong D.-H."/>
            <person name="Jing Y."/>
            <person name="Jocker A."/>
            <person name="Kenton S.M."/>
            <person name="Kim D.-J."/>
            <person name="Klee K."/>
            <person name="Lai H."/>
            <person name="Lang C."/>
            <person name="Lin S."/>
            <person name="Macmil S.L."/>
            <person name="Magdelenat G."/>
            <person name="Matthews L."/>
            <person name="McCorrison J."/>
            <person name="Monaghan E.L."/>
            <person name="Mun J.-H."/>
            <person name="Najar F.Z."/>
            <person name="Nicholson C."/>
            <person name="Noirot C."/>
            <person name="O'Bleness M."/>
            <person name="Paule C.R."/>
            <person name="Poulain J."/>
            <person name="Prion F."/>
            <person name="Qin B."/>
            <person name="Qu C."/>
            <person name="Retzel E.F."/>
            <person name="Riddle C."/>
            <person name="Sallet E."/>
            <person name="Samain S."/>
            <person name="Samson N."/>
            <person name="Sanders I."/>
            <person name="Saurat O."/>
            <person name="Scarpelli C."/>
            <person name="Schiex T."/>
            <person name="Segurens B."/>
            <person name="Severin A.J."/>
            <person name="Sherrier D.J."/>
            <person name="Shi R."/>
            <person name="Sims S."/>
            <person name="Singer S.R."/>
            <person name="Sinharoy S."/>
            <person name="Sterck L."/>
            <person name="Viollet A."/>
            <person name="Wang B.-B."/>
            <person name="Wang K."/>
            <person name="Wang M."/>
            <person name="Wang X."/>
            <person name="Warfsmann J."/>
            <person name="Weissenbach J."/>
            <person name="White D.D."/>
            <person name="White J.D."/>
            <person name="Wiley G.B."/>
            <person name="Wincker P."/>
            <person name="Xing Y."/>
            <person name="Yang L."/>
            <person name="Yao Z."/>
            <person name="Ying F."/>
            <person name="Zhai J."/>
            <person name="Zhou L."/>
            <person name="Zuber A."/>
            <person name="Denarie J."/>
            <person name="Dixon R.A."/>
            <person name="May G.D."/>
            <person name="Schwartz D.C."/>
            <person name="Rogers J."/>
            <person name="Quetier F."/>
            <person name="Town C.D."/>
            <person name="Roe B.A."/>
        </authorList>
    </citation>
    <scope>NUCLEOTIDE SEQUENCE [LARGE SCALE GENOMIC DNA]</scope>
    <source>
        <strain>cv. Jemalong A17</strain>
    </source>
</reference>
<reference key="2">
    <citation type="journal article" date="2014" name="BMC Genomics">
        <title>An improved genome release (version Mt4.0) for the model legume Medicago truncatula.</title>
        <authorList>
            <person name="Tang H."/>
            <person name="Krishnakumar V."/>
            <person name="Bidwell S."/>
            <person name="Rosen B."/>
            <person name="Chan A."/>
            <person name="Zhou S."/>
            <person name="Gentzbittel L."/>
            <person name="Childs K.L."/>
            <person name="Yandell M."/>
            <person name="Gundlach H."/>
            <person name="Mayer K.F."/>
            <person name="Schwartz D.C."/>
            <person name="Town C.D."/>
        </authorList>
    </citation>
    <scope>GENOME REANNOTATION</scope>
    <source>
        <strain>cv. Jemalong A17</strain>
    </source>
</reference>
<reference key="3">
    <citation type="journal article" date="2018" name="Nat. Plants">
        <title>Whole-genome landscape of Medicago truncatula symbiotic genes.</title>
        <authorList>
            <person name="Pecrix Y."/>
            <person name="Staton S.E."/>
            <person name="Sallet E."/>
            <person name="Lelandais-Briere C."/>
            <person name="Moreau S."/>
            <person name="Carrere S."/>
            <person name="Blein T."/>
            <person name="Jardinaud M.F."/>
            <person name="Latrasse D."/>
            <person name="Zouine M."/>
            <person name="Zahm M."/>
            <person name="Kreplak J."/>
            <person name="Mayjonade B."/>
            <person name="Satge C."/>
            <person name="Perez M."/>
            <person name="Cauet S."/>
            <person name="Marande W."/>
            <person name="Chantry-Darmon C."/>
            <person name="Lopez-Roques C."/>
            <person name="Bouchez O."/>
            <person name="Berard A."/>
            <person name="Debelle F."/>
            <person name="Munos S."/>
            <person name="Bendahmane A."/>
            <person name="Berges H."/>
            <person name="Niebel A."/>
            <person name="Buitink J."/>
            <person name="Frugier F."/>
            <person name="Benhamed M."/>
            <person name="Crespi M."/>
            <person name="Gouzy J."/>
            <person name="Gamas P."/>
        </authorList>
    </citation>
    <scope>NUCLEOTIDE SEQUENCE [LARGE SCALE GENOMIC DNA]</scope>
    <source>
        <strain>cv. Jemalong A17</strain>
    </source>
</reference>
<reference key="4">
    <citation type="journal article" date="2015" name="Plant Physiol.">
        <title>Hyphal branching during arbuscule development requires reduced arbuscular mycorrhiza1.</title>
        <authorList>
            <person name="Park H.-J."/>
            <person name="Floss D.S."/>
            <person name="Levesque-Tremblay V."/>
            <person name="Bravo A."/>
            <person name="Harrison M.J."/>
        </authorList>
    </citation>
    <scope>FUNCTION</scope>
    <scope>DISRUPTION PHENOTYPE</scope>
    <scope>INDUCTION BY RAM1 AND GLOMUS VERSIFORME</scope>
    <scope>INTERACTION WITH RAM1</scope>
</reference>
<protein>
    <recommendedName>
        <fullName evidence="6">GRAS family protein RAD1</fullName>
    </recommendedName>
    <alternativeName>
        <fullName evidence="5">Protein REQUIRED FOR ARBUSCULE DEVELOPMENT 1</fullName>
        <shortName evidence="5">MtRAD1</shortName>
    </alternativeName>
</protein>